<protein>
    <recommendedName>
        <fullName evidence="6">AA9 family lytic polysaccharide monooxygenase A</fullName>
        <shortName evidence="6">AgAA9A</shortName>
        <ecNumber evidence="5">1.14.99.56</ecNumber>
    </recommendedName>
    <alternativeName>
        <fullName evidence="7">Cellulase AA9A</fullName>
    </alternativeName>
    <alternativeName>
        <fullName evidence="7">Endo-beta-1,4-glucanase AA9A</fullName>
        <shortName evidence="7">Endoglucanase AA9A</shortName>
    </alternativeName>
    <alternativeName>
        <fullName evidence="7">Glycosyl hydrolase 61 family protein AA9A</fullName>
    </alternativeName>
</protein>
<sequence length="249" mass="26483">MRGPLCFTLIAIAVTSVVAHTTVYGVWINGVFQGDGRDVYIRSPPNNDPVKDITSSAMACNVNNSPVGTTLSVAGGDRFTFEWYHDNRDDDIIAASHLGPIAVYIAPTTSNGAGTVWTKIFEDVYNGTWATTRLISAHGQHTVVIPEVPAGDYLLRAEIAALHEAYSLYSQVPSKGTQFYISCAQIRVTSESASGSELSANTAFPGTYTDSTPGILWNVYDQDPTEYVAPGPDVWSGAPGGSISQVGSA</sequence>
<accession>A0A2H3EDS0</accession>
<proteinExistence type="evidence at protein level"/>
<name>LP9A_ARMGA</name>
<comment type="function">
    <text evidence="5">Lytic polysaccharide monooxygenase (LPMO) that depolymerizes crystalline and amorphous polysaccharides via the oxidation of scissile alpha- or beta-(1-4)-glycosidic bonds, yielding C4 oxidation products (PubMed:33199373). Catalysis by LPMOs requires the reduction of the active-site copper from Cu(II) to Cu(I) by a reducing agent and H(2)O(2) or O(2) as a cosubstrate (PubMed:33199373). Active on cellulose and cello-oligosaccharides, as well as plant cell wall-derived hemicellulosic polysaccharides (PubMed:33199373). Also active on cello-oligosaccharides such as cellohexaose, cellopentaose or cellotetraose (PubMed:33199373).</text>
</comment>
<comment type="catalytic activity">
    <reaction evidence="5">
        <text>[(1-&gt;4)-beta-D-glucosyl]n+m + reduced acceptor + O2 = 4-dehydro-beta-D-glucosyl-[(1-&gt;4)-beta-D-glucosyl]n-1 + [(1-&gt;4)-beta-D-glucosyl]m + acceptor + H2O.</text>
        <dbReference type="EC" id="1.14.99.56"/>
    </reaction>
</comment>
<comment type="cofactor">
    <cofactor evidence="3">
        <name>Cu(2+)</name>
        <dbReference type="ChEBI" id="CHEBI:29036"/>
    </cofactor>
    <text evidence="3">Binds 1 copper ion per subunit.</text>
</comment>
<comment type="subcellular location">
    <subcellularLocation>
        <location evidence="8">Secreted</location>
    </subcellularLocation>
</comment>
<comment type="biotechnology">
    <text evidence="3">Lignocellulose is the most abundant polymeric composite on Earth and is a recalcitrant but promising renewable substrate for industrial biotechnology applications. Together with cellobiose dehydrogenases (CDHs) an enzymatic system capable of oxidative cellulose cleavage is formed, which increases the efficiency of cellulases and put LPMOs at focus of biofuel research.</text>
</comment>
<comment type="similarity">
    <text evidence="7">Belongs to the polysaccharide monooxygenase AA9 family.</text>
</comment>
<evidence type="ECO:0000250" key="1">
    <source>
        <dbReference type="UniProtKB" id="A0A223GEC9"/>
    </source>
</evidence>
<evidence type="ECO:0000250" key="2">
    <source>
        <dbReference type="UniProtKB" id="Q1K8B6"/>
    </source>
</evidence>
<evidence type="ECO:0000250" key="3">
    <source>
        <dbReference type="UniProtKB" id="Q4WP32"/>
    </source>
</evidence>
<evidence type="ECO:0000255" key="4"/>
<evidence type="ECO:0000269" key="5">
    <source>
    </source>
</evidence>
<evidence type="ECO:0000303" key="6">
    <source>
    </source>
</evidence>
<evidence type="ECO:0000305" key="7"/>
<evidence type="ECO:0000305" key="8">
    <source>
    </source>
</evidence>
<dbReference type="EC" id="1.14.99.56" evidence="5"/>
<dbReference type="EMBL" id="KZ293647">
    <property type="protein sequence ID" value="PBK99387.1"/>
    <property type="molecule type" value="Genomic_DNA"/>
</dbReference>
<dbReference type="SMR" id="A0A2H3EDS0"/>
<dbReference type="STRING" id="47427.A0A2H3EDS0"/>
<dbReference type="InParanoid" id="A0A2H3EDS0"/>
<dbReference type="OMA" id="YHNTRDD"/>
<dbReference type="OrthoDB" id="2525337at2759"/>
<dbReference type="Proteomes" id="UP000217790">
    <property type="component" value="Unassembled WGS sequence"/>
</dbReference>
<dbReference type="GO" id="GO:0005576">
    <property type="term" value="C:extracellular region"/>
    <property type="evidence" value="ECO:0007669"/>
    <property type="project" value="UniProtKB-SubCell"/>
</dbReference>
<dbReference type="GO" id="GO:0046872">
    <property type="term" value="F:metal ion binding"/>
    <property type="evidence" value="ECO:0007669"/>
    <property type="project" value="UniProtKB-KW"/>
</dbReference>
<dbReference type="GO" id="GO:0004497">
    <property type="term" value="F:monooxygenase activity"/>
    <property type="evidence" value="ECO:0007669"/>
    <property type="project" value="UniProtKB-KW"/>
</dbReference>
<dbReference type="GO" id="GO:0030245">
    <property type="term" value="P:cellulose catabolic process"/>
    <property type="evidence" value="ECO:0007669"/>
    <property type="project" value="UniProtKB-KW"/>
</dbReference>
<dbReference type="CDD" id="cd21175">
    <property type="entry name" value="LPMO_AA9"/>
    <property type="match status" value="1"/>
</dbReference>
<dbReference type="Gene3D" id="2.70.50.70">
    <property type="match status" value="1"/>
</dbReference>
<dbReference type="InterPro" id="IPR049892">
    <property type="entry name" value="AA9"/>
</dbReference>
<dbReference type="InterPro" id="IPR005103">
    <property type="entry name" value="AA9_LPMO"/>
</dbReference>
<dbReference type="PANTHER" id="PTHR33353:SF17">
    <property type="entry name" value="ENDO-BETA-1,4-GLUCANASE D"/>
    <property type="match status" value="1"/>
</dbReference>
<dbReference type="PANTHER" id="PTHR33353">
    <property type="entry name" value="PUTATIVE (AFU_ORTHOLOGUE AFUA_1G12560)-RELATED"/>
    <property type="match status" value="1"/>
</dbReference>
<dbReference type="Pfam" id="PF03443">
    <property type="entry name" value="AA9"/>
    <property type="match status" value="1"/>
</dbReference>
<feature type="signal peptide" evidence="4">
    <location>
        <begin position="1"/>
        <end position="19"/>
    </location>
</feature>
<feature type="chain" id="PRO_5013621812" description="AA9 family lytic polysaccharide monooxygenase A">
    <location>
        <begin position="20"/>
        <end position="249"/>
    </location>
</feature>
<feature type="binding site" evidence="1">
    <location>
        <position position="20"/>
    </location>
    <ligand>
        <name>Cu(2+)</name>
        <dbReference type="ChEBI" id="CHEBI:29036"/>
        <note>catalytic</note>
    </ligand>
</feature>
<feature type="binding site" evidence="1">
    <location>
        <position position="97"/>
    </location>
    <ligand>
        <name>Cu(2+)</name>
        <dbReference type="ChEBI" id="CHEBI:29036"/>
        <note>catalytic</note>
    </ligand>
</feature>
<feature type="binding site" evidence="2">
    <location>
        <position position="163"/>
    </location>
    <ligand>
        <name>O2</name>
        <dbReference type="ChEBI" id="CHEBI:15379"/>
    </ligand>
</feature>
<feature type="binding site" evidence="1">
    <location>
        <position position="180"/>
    </location>
    <ligand>
        <name>Cu(2+)</name>
        <dbReference type="ChEBI" id="CHEBI:29036"/>
        <note>catalytic</note>
    </ligand>
</feature>
<feature type="disulfide bond" evidence="1">
    <location>
        <begin position="60"/>
        <end position="183"/>
    </location>
</feature>
<organism>
    <name type="scientific">Armillaria gallica</name>
    <name type="common">Bulbous honey fungus</name>
    <name type="synonym">Armillaria bulbosa</name>
    <dbReference type="NCBI Taxonomy" id="47427"/>
    <lineage>
        <taxon>Eukaryota</taxon>
        <taxon>Fungi</taxon>
        <taxon>Dikarya</taxon>
        <taxon>Basidiomycota</taxon>
        <taxon>Agaricomycotina</taxon>
        <taxon>Agaricomycetes</taxon>
        <taxon>Agaricomycetidae</taxon>
        <taxon>Agaricales</taxon>
        <taxon>Marasmiineae</taxon>
        <taxon>Physalacriaceae</taxon>
        <taxon>Armillaria</taxon>
    </lineage>
</organism>
<reference key="1">
    <citation type="journal article" date="2017" name="Nat. Ecol. Evol.">
        <title>Genome expansion and lineage-specific genetic innovations in the forest pathogenic fungi Armillaria.</title>
        <authorList>
            <person name="Sipos G."/>
            <person name="Prasanna A.N."/>
            <person name="Walter M.C."/>
            <person name="O'Connor E."/>
            <person name="Balint B."/>
            <person name="Krizsan K."/>
            <person name="Kiss B."/>
            <person name="Hess J."/>
            <person name="Varga T."/>
            <person name="Slot J."/>
            <person name="Riley R."/>
            <person name="Boka B."/>
            <person name="Rigling D."/>
            <person name="Barry K."/>
            <person name="Lee J."/>
            <person name="Mihaltcheva S."/>
            <person name="LaButti K."/>
            <person name="Lipzen A."/>
            <person name="Waldron R."/>
            <person name="Moloney N.M."/>
            <person name="Sperisen C."/>
            <person name="Kredics L."/>
            <person name="Vagvoelgyi C."/>
            <person name="Patrignani A."/>
            <person name="Fitzpatrick D."/>
            <person name="Nagy I."/>
            <person name="Doyle S."/>
            <person name="Anderson J.B."/>
            <person name="Grigoriev I.V."/>
            <person name="Gueldener U."/>
            <person name="Muensterkoetter M."/>
            <person name="Nagy L.G."/>
        </authorList>
    </citation>
    <scope>NUCLEOTIDE SEQUENCE [LARGE SCALE GENOMIC DNA]</scope>
    <source>
        <strain>Ar21-2</strain>
    </source>
</reference>
<reference key="2">
    <citation type="journal article" date="2021" name="J. Biol. Chem.">
        <title>Identification of the molecular determinants driving the substrate specificity of fungal lytic polysaccharide monooxygenases (LPMOs).</title>
        <authorList>
            <person name="Frandsen K.E.H."/>
            <person name="Haon M."/>
            <person name="Grisel S."/>
            <person name="Henrissat B."/>
            <person name="Lo Leggio L."/>
            <person name="Berrin J.G."/>
        </authorList>
    </citation>
    <scope>FUNCTION</scope>
    <scope>CATALYTIC ACTIVITY</scope>
    <scope>SUBSTRATE SPECIFICITY</scope>
</reference>
<gene>
    <name evidence="6" type="primary">AA9A</name>
    <name type="ORF">ARMGADRAFT_500811</name>
</gene>
<keyword id="KW-0119">Carbohydrate metabolism</keyword>
<keyword id="KW-0136">Cellulose degradation</keyword>
<keyword id="KW-0186">Copper</keyword>
<keyword id="KW-1015">Disulfide bond</keyword>
<keyword id="KW-0479">Metal-binding</keyword>
<keyword id="KW-0503">Monooxygenase</keyword>
<keyword id="KW-0560">Oxidoreductase</keyword>
<keyword id="KW-0624">Polysaccharide degradation</keyword>
<keyword id="KW-1185">Reference proteome</keyword>
<keyword id="KW-0964">Secreted</keyword>
<keyword id="KW-0732">Signal</keyword>